<dbReference type="EMBL" id="X60651">
    <property type="protein sequence ID" value="CAA43058.1"/>
    <property type="molecule type" value="mRNA"/>
</dbReference>
<dbReference type="EMBL" id="M81785">
    <property type="protein sequence ID" value="AAA42198.1"/>
    <property type="molecule type" value="mRNA"/>
</dbReference>
<dbReference type="EMBL" id="S61865">
    <property type="protein sequence ID" value="AAB26726.1"/>
    <property type="molecule type" value="mRNA"/>
</dbReference>
<dbReference type="EMBL" id="BC061834">
    <property type="protein sequence ID" value="AAH61834.1"/>
    <property type="molecule type" value="mRNA"/>
</dbReference>
<dbReference type="PIR" id="A42853">
    <property type="entry name" value="A42853"/>
</dbReference>
<dbReference type="RefSeq" id="NP_037158.1">
    <property type="nucleotide sequence ID" value="NM_013026.2"/>
</dbReference>
<dbReference type="FunCoup" id="P26260">
    <property type="interactions" value="307"/>
</dbReference>
<dbReference type="IntAct" id="P26260">
    <property type="interactions" value="4"/>
</dbReference>
<dbReference type="STRING" id="10116.ENSRNOP00000072283"/>
<dbReference type="GlyCosmos" id="P26260">
    <property type="glycosylation" value="6 sites, No reported glycans"/>
</dbReference>
<dbReference type="GlyGen" id="P26260">
    <property type="glycosylation" value="6 sites"/>
</dbReference>
<dbReference type="iPTMnet" id="P26260"/>
<dbReference type="PhosphoSitePlus" id="P26260"/>
<dbReference type="jPOST" id="P26260"/>
<dbReference type="PaxDb" id="10116-ENSRNOP00000008582"/>
<dbReference type="Ensembl" id="ENSRNOT00000086633.2">
    <property type="protein sequence ID" value="ENSRNOP00000072283.1"/>
    <property type="gene ID" value="ENSRNOG00000059947.2"/>
</dbReference>
<dbReference type="GeneID" id="25216"/>
<dbReference type="KEGG" id="rno:25216"/>
<dbReference type="AGR" id="RGD:3648"/>
<dbReference type="CTD" id="6382"/>
<dbReference type="RGD" id="3648">
    <property type="gene designation" value="Sdc1"/>
</dbReference>
<dbReference type="eggNOG" id="ENOG502RZWT">
    <property type="taxonomic scope" value="Eukaryota"/>
</dbReference>
<dbReference type="GeneTree" id="ENSGT00940000161171"/>
<dbReference type="HOGENOM" id="CLU_887201_0_0_1"/>
<dbReference type="InParanoid" id="P26260"/>
<dbReference type="OMA" id="VFCFQAV"/>
<dbReference type="OrthoDB" id="10044468at2759"/>
<dbReference type="PhylomeDB" id="P26260"/>
<dbReference type="TreeFam" id="TF320463"/>
<dbReference type="Reactome" id="R-RNO-1971475">
    <property type="pathway name" value="A tetrasaccharide linker sequence is required for GAG synthesis"/>
</dbReference>
<dbReference type="Reactome" id="R-RNO-2022928">
    <property type="pathway name" value="HS-GAG biosynthesis"/>
</dbReference>
<dbReference type="Reactome" id="R-RNO-2024096">
    <property type="pathway name" value="HS-GAG degradation"/>
</dbReference>
<dbReference type="Reactome" id="R-RNO-202733">
    <property type="pathway name" value="Cell surface interactions at the vascular wall"/>
</dbReference>
<dbReference type="Reactome" id="R-RNO-3000170">
    <property type="pathway name" value="Syndecan interactions"/>
</dbReference>
<dbReference type="Reactome" id="R-RNO-449836">
    <property type="pathway name" value="Other interleukin signaling"/>
</dbReference>
<dbReference type="Reactome" id="R-RNO-975634">
    <property type="pathway name" value="Retinoid metabolism and transport"/>
</dbReference>
<dbReference type="PRO" id="PR:P26260"/>
<dbReference type="Proteomes" id="UP000002494">
    <property type="component" value="Chromosome 6"/>
</dbReference>
<dbReference type="Bgee" id="ENSRNOG00000059947">
    <property type="expression patterns" value="Expressed in esophagus and 17 other cell types or tissues"/>
</dbReference>
<dbReference type="GO" id="GO:0009986">
    <property type="term" value="C:cell surface"/>
    <property type="evidence" value="ECO:0000266"/>
    <property type="project" value="RGD"/>
</dbReference>
<dbReference type="GO" id="GO:0009897">
    <property type="term" value="C:external side of plasma membrane"/>
    <property type="evidence" value="ECO:0000266"/>
    <property type="project" value="RGD"/>
</dbReference>
<dbReference type="GO" id="GO:0005576">
    <property type="term" value="C:extracellular region"/>
    <property type="evidence" value="ECO:0007669"/>
    <property type="project" value="UniProtKB-SubCell"/>
</dbReference>
<dbReference type="GO" id="GO:0005886">
    <property type="term" value="C:plasma membrane"/>
    <property type="evidence" value="ECO:0000266"/>
    <property type="project" value="RGD"/>
</dbReference>
<dbReference type="GO" id="GO:0032991">
    <property type="term" value="C:protein-containing complex"/>
    <property type="evidence" value="ECO:0000314"/>
    <property type="project" value="RGD"/>
</dbReference>
<dbReference type="GO" id="GO:0038024">
    <property type="term" value="F:cargo receptor activity"/>
    <property type="evidence" value="ECO:0000266"/>
    <property type="project" value="RGD"/>
</dbReference>
<dbReference type="GO" id="GO:0050840">
    <property type="term" value="F:extracellular matrix binding"/>
    <property type="evidence" value="ECO:0000304"/>
    <property type="project" value="RGD"/>
</dbReference>
<dbReference type="GO" id="GO:0042802">
    <property type="term" value="F:identical protein binding"/>
    <property type="evidence" value="ECO:0000266"/>
    <property type="project" value="RGD"/>
</dbReference>
<dbReference type="GO" id="GO:0060070">
    <property type="term" value="P:canonical Wnt signaling pathway"/>
    <property type="evidence" value="ECO:0000266"/>
    <property type="project" value="RGD"/>
</dbReference>
<dbReference type="GO" id="GO:0007155">
    <property type="term" value="P:cell adhesion"/>
    <property type="evidence" value="ECO:0000303"/>
    <property type="project" value="RGD"/>
</dbReference>
<dbReference type="GO" id="GO:0016477">
    <property type="term" value="P:cell migration"/>
    <property type="evidence" value="ECO:0000318"/>
    <property type="project" value="GO_Central"/>
</dbReference>
<dbReference type="GO" id="GO:0007267">
    <property type="term" value="P:cell-cell signaling"/>
    <property type="evidence" value="ECO:0000303"/>
    <property type="project" value="RGD"/>
</dbReference>
<dbReference type="GO" id="GO:0048627">
    <property type="term" value="P:myoblast development"/>
    <property type="evidence" value="ECO:0000266"/>
    <property type="project" value="RGD"/>
</dbReference>
<dbReference type="GO" id="GO:1903543">
    <property type="term" value="P:positive regulation of exosomal secretion"/>
    <property type="evidence" value="ECO:0000266"/>
    <property type="project" value="RGD"/>
</dbReference>
<dbReference type="GO" id="GO:1903553">
    <property type="term" value="P:positive regulation of extracellular exosome assembly"/>
    <property type="evidence" value="ECO:0000266"/>
    <property type="project" value="RGD"/>
</dbReference>
<dbReference type="GO" id="GO:0006898">
    <property type="term" value="P:receptor-mediated endocytosis"/>
    <property type="evidence" value="ECO:0000266"/>
    <property type="project" value="RGD"/>
</dbReference>
<dbReference type="GO" id="GO:0051592">
    <property type="term" value="P:response to calcium ion"/>
    <property type="evidence" value="ECO:0000270"/>
    <property type="project" value="RGD"/>
</dbReference>
<dbReference type="GO" id="GO:0051591">
    <property type="term" value="P:response to cAMP"/>
    <property type="evidence" value="ECO:0000270"/>
    <property type="project" value="RGD"/>
</dbReference>
<dbReference type="GO" id="GO:0051384">
    <property type="term" value="P:response to glucocorticoid"/>
    <property type="evidence" value="ECO:0000270"/>
    <property type="project" value="RGD"/>
</dbReference>
<dbReference type="GO" id="GO:0042542">
    <property type="term" value="P:response to hydrogen peroxide"/>
    <property type="evidence" value="ECO:0000270"/>
    <property type="project" value="RGD"/>
</dbReference>
<dbReference type="GO" id="GO:0009636">
    <property type="term" value="P:response to toxic substance"/>
    <property type="evidence" value="ECO:0000270"/>
    <property type="project" value="RGD"/>
</dbReference>
<dbReference type="GO" id="GO:0060009">
    <property type="term" value="P:Sertoli cell development"/>
    <property type="evidence" value="ECO:0000270"/>
    <property type="project" value="RGD"/>
</dbReference>
<dbReference type="GO" id="GO:0055002">
    <property type="term" value="P:striated muscle cell development"/>
    <property type="evidence" value="ECO:0000266"/>
    <property type="project" value="RGD"/>
</dbReference>
<dbReference type="GO" id="GO:0001657">
    <property type="term" value="P:ureteric bud development"/>
    <property type="evidence" value="ECO:0000270"/>
    <property type="project" value="RGD"/>
</dbReference>
<dbReference type="InterPro" id="IPR003585">
    <property type="entry name" value="Neurexin-like"/>
</dbReference>
<dbReference type="InterPro" id="IPR001050">
    <property type="entry name" value="Syndecan"/>
</dbReference>
<dbReference type="InterPro" id="IPR027789">
    <property type="entry name" value="Syndecan/Neurexin_dom"/>
</dbReference>
<dbReference type="InterPro" id="IPR030479">
    <property type="entry name" value="Syndecan_CS"/>
</dbReference>
<dbReference type="PANTHER" id="PTHR10915">
    <property type="entry name" value="SYNDECAN"/>
    <property type="match status" value="1"/>
</dbReference>
<dbReference type="PANTHER" id="PTHR10915:SF5">
    <property type="entry name" value="SYNDECAN-1"/>
    <property type="match status" value="1"/>
</dbReference>
<dbReference type="Pfam" id="PF01034">
    <property type="entry name" value="Syndecan"/>
    <property type="match status" value="1"/>
</dbReference>
<dbReference type="SMART" id="SM00294">
    <property type="entry name" value="4.1m"/>
    <property type="match status" value="1"/>
</dbReference>
<dbReference type="PROSITE" id="PS00964">
    <property type="entry name" value="SYNDECAN"/>
    <property type="match status" value="1"/>
</dbReference>
<reference key="1">
    <citation type="journal article" date="1992" name="J. Biol. Chem.">
        <title>Molecular cloning and expression of two distinct cDNA-encoding heparan sulfate proteoglycan core proteins from a rat endothelial cell line.</title>
        <authorList>
            <person name="Kojima T."/>
            <person name="Shworak N.W."/>
            <person name="Rosenberg R.D."/>
        </authorList>
    </citation>
    <scope>NUCLEOTIDE SEQUENCE [MRNA]</scope>
</reference>
<reference key="2">
    <citation type="journal article" date="1993" name="Haemostasis">
        <title>Isolation and characterization of ryudocan and syndecan heparan sulfate proteoglycans, core proteins, and cDNAs from a rat endothelial cell line.</title>
        <authorList>
            <person name="Shworak N.W."/>
            <person name="Kojima T."/>
            <person name="Rosenberg R.D."/>
        </authorList>
    </citation>
    <scope>NUCLEOTIDE SEQUENCE [MRNA]</scope>
    <source>
        <tissue>Endothelial cell</tissue>
    </source>
</reference>
<reference key="3">
    <citation type="journal article" date="1992" name="J. Biol. Chem.">
        <title>Regulated expression of syndecan in vascular smooth muscle cells and cloning of rat syndecan core protein cDNA.</title>
        <authorList>
            <person name="Cizmeci-Smith G."/>
            <person name="Asundi V."/>
            <person name="Stahl R.C."/>
            <person name="Teichman L.J."/>
            <person name="Chernousov M."/>
            <person name="Cowan K."/>
            <person name="Carey D.J."/>
        </authorList>
    </citation>
    <scope>NUCLEOTIDE SEQUENCE [MRNA]</scope>
    <source>
        <strain>Sprague-Dawley</strain>
        <tissue>Aorta</tissue>
    </source>
</reference>
<reference key="4">
    <citation type="journal article" date="2004" name="Genome Res.">
        <title>The status, quality, and expansion of the NIH full-length cDNA project: the Mammalian Gene Collection (MGC).</title>
        <authorList>
            <consortium name="The MGC Project Team"/>
        </authorList>
    </citation>
    <scope>NUCLEOTIDE SEQUENCE [LARGE SCALE MRNA]</scope>
    <source>
        <tissue>Prostate</tissue>
    </source>
</reference>
<reference key="5">
    <citation type="journal article" date="1997" name="J. Biochem.">
        <title>Expression of syndecan-1 and -3 during embryogenesis of the central nervous system in relation to binding with midkine.</title>
        <authorList>
            <person name="Nakanishi T."/>
            <person name="Kadomatsu K."/>
            <person name="Okamoto T."/>
            <person name="Ichihara-Tanaka K."/>
            <person name="Kojima T."/>
            <person name="Saito H."/>
            <person name="Tomoda Y."/>
            <person name="Muramatsu T."/>
        </authorList>
    </citation>
    <scope>INTERACTION WITH MDK</scope>
</reference>
<name>SDC1_RAT</name>
<proteinExistence type="evidence at protein level"/>
<sequence>MRRAALWLWLCALALRLQPALPQIVTANVPPEDQDGSGDDSDNFSGSGTGALPDMTLSRQTPSTWKDVWLLTATPTAPEPTSRDTEATLTSILPAGEKPEEGEPVAHVEAEPDFTARDKEKEATTRPRETTQLPVTQQASTAARATTAQASVTSHPHGDVQPGLHETLAPTAPGQPDHQPPSVEDGGTSVIKEVVEDETTNQLPAGEGSGEQDFTFETSGENTAVAGVEPDLRNQSPVDEGATGASQGLLDRKEVLGGVIAGGLVGLIFAVCLVAFMLYRMKKKDEGSYSLEEPKQANGGAYQKPTKQEEFYA</sequence>
<gene>
    <name evidence="8" type="primary">Sdc1</name>
    <name evidence="8" type="synonym">Synd1</name>
</gene>
<protein>
    <recommendedName>
        <fullName evidence="8">Syndecan-1</fullName>
        <shortName evidence="8">SYND1</shortName>
    </recommendedName>
    <cdAntigenName>CD138</cdAntigenName>
</protein>
<comment type="function">
    <text evidence="2 3">Cell surface proteoglycan that contains both heparan sulfate and chondroitin sulfate and that links the cytoskeleton to the interstitial matrix (By similarity). Regulates exosome biogenesis in concert with SDCBP and PDCD6IP (By similarity). Able to induce its own expression in dental mesenchymal cells and also in the neighboring dental epithelial cells via an MSX1-mediated pathway (By similarity).</text>
</comment>
<comment type="subunit">
    <text evidence="2 6">Interacts with CDCP1. Interacts (via C-terminus) with TIAM1 (via PDZ domain) (By similarity). Interacts with MDK (PubMed:9089390).</text>
</comment>
<comment type="interaction">
    <interactant intactId="EBI-1173127">
        <id>P26260</id>
    </interactant>
    <interactant intactId="EBI-1173032">
        <id>P34900</id>
        <label>Sdc2</label>
    </interactant>
    <organismsDiffer>false</organismsDiffer>
    <experiments>2</experiments>
</comment>
<comment type="subcellular location">
    <subcellularLocation>
        <location evidence="4">Membrane</location>
        <topology evidence="4">Single-pass type I membrane protein</topology>
    </subcellularLocation>
    <subcellularLocation>
        <location evidence="2">Secreted</location>
    </subcellularLocation>
    <subcellularLocation>
        <location evidence="2">Secreted</location>
        <location evidence="2">Extracellular exosome</location>
    </subcellularLocation>
    <text evidence="2">Shedding of the ectodomain produces a soluble form.</text>
</comment>
<comment type="PTM">
    <text evidence="2">Shedding is enhanced by a number of factors such as heparanase, thrombin or EGF. Also by stress and wound healing. PMA-mediated shedding is inhibited by TIMP3 (By similarity).</text>
</comment>
<comment type="similarity">
    <text evidence="7">Belongs to the syndecan proteoglycan family.</text>
</comment>
<evidence type="ECO:0000250" key="1"/>
<evidence type="ECO:0000250" key="2">
    <source>
        <dbReference type="UniProtKB" id="P18827"/>
    </source>
</evidence>
<evidence type="ECO:0000250" key="3">
    <source>
        <dbReference type="UniProtKB" id="P18828"/>
    </source>
</evidence>
<evidence type="ECO:0000255" key="4"/>
<evidence type="ECO:0000256" key="5">
    <source>
        <dbReference type="SAM" id="MobiDB-lite"/>
    </source>
</evidence>
<evidence type="ECO:0000269" key="6">
    <source>
    </source>
</evidence>
<evidence type="ECO:0000305" key="7"/>
<evidence type="ECO:0000312" key="8">
    <source>
        <dbReference type="RGD" id="3648"/>
    </source>
</evidence>
<feature type="signal peptide" evidence="4">
    <location>
        <begin position="1"/>
        <end position="22"/>
    </location>
</feature>
<feature type="chain" id="PRO_0000033502" description="Syndecan-1">
    <location>
        <begin position="23"/>
        <end position="313"/>
    </location>
</feature>
<feature type="topological domain" description="Extracellular" evidence="4">
    <location>
        <begin position="23"/>
        <end position="257"/>
    </location>
</feature>
<feature type="transmembrane region" description="Helical" evidence="4">
    <location>
        <begin position="258"/>
        <end position="278"/>
    </location>
</feature>
<feature type="topological domain" description="Cytoplasmic" evidence="4">
    <location>
        <begin position="279"/>
        <end position="313"/>
    </location>
</feature>
<feature type="region of interest" description="Disordered" evidence="5">
    <location>
        <begin position="27"/>
        <end position="58"/>
    </location>
</feature>
<feature type="region of interest" description="Disordered" evidence="5">
    <location>
        <begin position="95"/>
        <end position="186"/>
    </location>
</feature>
<feature type="region of interest" description="Disordered" evidence="5">
    <location>
        <begin position="286"/>
        <end position="313"/>
    </location>
</feature>
<feature type="compositionally biased region" description="Acidic residues" evidence="5">
    <location>
        <begin position="32"/>
        <end position="42"/>
    </location>
</feature>
<feature type="compositionally biased region" description="Basic and acidic residues" evidence="5">
    <location>
        <begin position="97"/>
        <end position="129"/>
    </location>
</feature>
<feature type="compositionally biased region" description="Low complexity" evidence="5">
    <location>
        <begin position="135"/>
        <end position="154"/>
    </location>
</feature>
<feature type="compositionally biased region" description="Basic and acidic residues" evidence="5">
    <location>
        <begin position="286"/>
        <end position="295"/>
    </location>
</feature>
<feature type="site" description="Cleavage of ectodomain" evidence="4">
    <location>
        <begin position="253"/>
        <end position="254"/>
    </location>
</feature>
<feature type="modified residue" description="Phosphoserine" evidence="2">
    <location>
        <position position="288"/>
    </location>
</feature>
<feature type="glycosylation site" description="O-linked (Xyl...) (chondroitin sulfate) serine" evidence="3">
    <location>
        <position position="37"/>
    </location>
</feature>
<feature type="glycosylation site" description="N-linked (GlcNAc...) asparagine" evidence="4">
    <location>
        <position position="43"/>
    </location>
</feature>
<feature type="glycosylation site" description="O-linked (Xyl...) (heparan sulfate) serine" evidence="1">
    <location>
        <position position="45"/>
    </location>
</feature>
<feature type="glycosylation site" description="O-linked (Xyl...) (heparan sulfate) serine" evidence="1">
    <location>
        <position position="47"/>
    </location>
</feature>
<feature type="glycosylation site" description="O-linked (Xyl...) (chondroitin sulfate) serine" evidence="2">
    <location>
        <position position="209"/>
    </location>
</feature>
<feature type="glycosylation site" description="O-linked (Xyl...) (chondroitin sulfate) serine" evidence="3">
    <location>
        <position position="219"/>
    </location>
</feature>
<feature type="sequence conflict" description="In Ref. 3." evidence="7" ref="3">
    <original>L</original>
    <variation>V</variation>
    <location>
        <position position="15"/>
    </location>
</feature>
<accession>P26260</accession>
<keyword id="KW-0325">Glycoprotein</keyword>
<keyword id="KW-0357">Heparan sulfate</keyword>
<keyword id="KW-0472">Membrane</keyword>
<keyword id="KW-0597">Phosphoprotein</keyword>
<keyword id="KW-0654">Proteoglycan</keyword>
<keyword id="KW-1185">Reference proteome</keyword>
<keyword id="KW-0964">Secreted</keyword>
<keyword id="KW-0732">Signal</keyword>
<keyword id="KW-0812">Transmembrane</keyword>
<keyword id="KW-1133">Transmembrane helix</keyword>
<organism>
    <name type="scientific">Rattus norvegicus</name>
    <name type="common">Rat</name>
    <dbReference type="NCBI Taxonomy" id="10116"/>
    <lineage>
        <taxon>Eukaryota</taxon>
        <taxon>Metazoa</taxon>
        <taxon>Chordata</taxon>
        <taxon>Craniata</taxon>
        <taxon>Vertebrata</taxon>
        <taxon>Euteleostomi</taxon>
        <taxon>Mammalia</taxon>
        <taxon>Eutheria</taxon>
        <taxon>Euarchontoglires</taxon>
        <taxon>Glires</taxon>
        <taxon>Rodentia</taxon>
        <taxon>Myomorpha</taxon>
        <taxon>Muroidea</taxon>
        <taxon>Muridae</taxon>
        <taxon>Murinae</taxon>
        <taxon>Rattus</taxon>
    </lineage>
</organism>